<feature type="chain" id="PRO_0000109960" description="Putative heme chaperone HemW-like protein">
    <location>
        <begin position="1"/>
        <end position="374"/>
    </location>
</feature>
<feature type="domain" description="Radical SAM core" evidence="3">
    <location>
        <begin position="1"/>
        <end position="231"/>
    </location>
</feature>
<keyword id="KW-0963">Cytoplasm</keyword>
<keyword id="KW-1185">Reference proteome</keyword>
<dbReference type="EMBL" id="AE016826">
    <property type="protein sequence ID" value="AAO27203.1"/>
    <property type="molecule type" value="Genomic_DNA"/>
</dbReference>
<dbReference type="RefSeq" id="WP_011091604.1">
    <property type="nucleotide sequence ID" value="NC_004545.1"/>
</dbReference>
<dbReference type="SMR" id="Q89A47"/>
<dbReference type="STRING" id="224915.bbp_498"/>
<dbReference type="KEGG" id="bab:bbp_498"/>
<dbReference type="eggNOG" id="COG0635">
    <property type="taxonomic scope" value="Bacteria"/>
</dbReference>
<dbReference type="HOGENOM" id="CLU_027579_2_1_6"/>
<dbReference type="OrthoDB" id="9808022at2"/>
<dbReference type="Proteomes" id="UP000000601">
    <property type="component" value="Chromosome"/>
</dbReference>
<dbReference type="GO" id="GO:0005737">
    <property type="term" value="C:cytoplasm"/>
    <property type="evidence" value="ECO:0007669"/>
    <property type="project" value="UniProtKB-SubCell"/>
</dbReference>
<dbReference type="GO" id="GO:0051539">
    <property type="term" value="F:4 iron, 4 sulfur cluster binding"/>
    <property type="evidence" value="ECO:0007669"/>
    <property type="project" value="InterPro"/>
</dbReference>
<dbReference type="GO" id="GO:0004109">
    <property type="term" value="F:coproporphyrinogen oxidase activity"/>
    <property type="evidence" value="ECO:0007669"/>
    <property type="project" value="InterPro"/>
</dbReference>
<dbReference type="GO" id="GO:0006779">
    <property type="term" value="P:porphyrin-containing compound biosynthetic process"/>
    <property type="evidence" value="ECO:0007669"/>
    <property type="project" value="InterPro"/>
</dbReference>
<dbReference type="InterPro" id="IPR034505">
    <property type="entry name" value="Coproporphyrinogen-III_oxidase"/>
</dbReference>
<dbReference type="InterPro" id="IPR006638">
    <property type="entry name" value="Elp3/MiaA/NifB-like_rSAM"/>
</dbReference>
<dbReference type="InterPro" id="IPR010723">
    <property type="entry name" value="HemN_C"/>
</dbReference>
<dbReference type="InterPro" id="IPR004559">
    <property type="entry name" value="HemW-like"/>
</dbReference>
<dbReference type="InterPro" id="IPR007197">
    <property type="entry name" value="rSAM"/>
</dbReference>
<dbReference type="NCBIfam" id="TIGR00539">
    <property type="entry name" value="hemN_rel"/>
    <property type="match status" value="1"/>
</dbReference>
<dbReference type="PANTHER" id="PTHR13932">
    <property type="entry name" value="COPROPORPHYRINIGEN III OXIDASE"/>
    <property type="match status" value="1"/>
</dbReference>
<dbReference type="PANTHER" id="PTHR13932:SF5">
    <property type="entry name" value="RADICAL S-ADENOSYL METHIONINE DOMAIN-CONTAINING PROTEIN 1, MITOCHONDRIAL"/>
    <property type="match status" value="1"/>
</dbReference>
<dbReference type="Pfam" id="PF06969">
    <property type="entry name" value="HemN_C"/>
    <property type="match status" value="1"/>
</dbReference>
<dbReference type="SMART" id="SM00729">
    <property type="entry name" value="Elp3"/>
    <property type="match status" value="1"/>
</dbReference>
<dbReference type="SUPFAM" id="SSF102114">
    <property type="entry name" value="Radical SAM enzymes"/>
    <property type="match status" value="1"/>
</dbReference>
<dbReference type="PROSITE" id="PS51918">
    <property type="entry name" value="RADICAL_SAM"/>
    <property type="match status" value="1"/>
</dbReference>
<reference key="1">
    <citation type="journal article" date="2003" name="Proc. Natl. Acad. Sci. U.S.A.">
        <title>Reductive genome evolution in Buchnera aphidicola.</title>
        <authorList>
            <person name="van Ham R.C.H.J."/>
            <person name="Kamerbeek J."/>
            <person name="Palacios C."/>
            <person name="Rausell C."/>
            <person name="Abascal F."/>
            <person name="Bastolla U."/>
            <person name="Fernandez J.M."/>
            <person name="Jimenez L."/>
            <person name="Postigo M."/>
            <person name="Silva F.J."/>
            <person name="Tamames J."/>
            <person name="Viguera E."/>
            <person name="Latorre A."/>
            <person name="Valencia A."/>
            <person name="Moran F."/>
            <person name="Moya A."/>
        </authorList>
    </citation>
    <scope>NUCLEOTIDE SEQUENCE [LARGE SCALE GENOMIC DNA]</scope>
    <source>
        <strain>Bp</strain>
    </source>
</reference>
<organism>
    <name type="scientific">Buchnera aphidicola subsp. Baizongia pistaciae (strain Bp)</name>
    <dbReference type="NCBI Taxonomy" id="224915"/>
    <lineage>
        <taxon>Bacteria</taxon>
        <taxon>Pseudomonadati</taxon>
        <taxon>Pseudomonadota</taxon>
        <taxon>Gammaproteobacteria</taxon>
        <taxon>Enterobacterales</taxon>
        <taxon>Erwiniaceae</taxon>
        <taxon>Buchnera</taxon>
    </lineage>
</organism>
<name>HEMWL_BUCBP</name>
<evidence type="ECO:0000250" key="1">
    <source>
        <dbReference type="UniProtKB" id="P52062"/>
    </source>
</evidence>
<evidence type="ECO:0000250" key="2">
    <source>
        <dbReference type="UniProtKB" id="Q9CGF7"/>
    </source>
</evidence>
<evidence type="ECO:0000255" key="3">
    <source>
        <dbReference type="PROSITE-ProRule" id="PRU01266"/>
    </source>
</evidence>
<evidence type="ECO:0000305" key="4"/>
<comment type="function">
    <text evidence="1 4">Might be a heme chaperone; in E.coli heme binds independently of binding to [4Fe-4S] or S-adenosyl-L-methionine.</text>
</comment>
<comment type="subcellular location">
    <subcellularLocation>
        <location evidence="2">Cytoplasm</location>
    </subcellularLocation>
</comment>
<comment type="similarity">
    <text evidence="4">Belongs to the anaerobic coproporphyrinogen-III oxidase family. HemW subfamily.</text>
</comment>
<comment type="caution">
    <text evidence="4">Pro-13, Tyr-17 and His-20 are present instead of the conserved Cys which are required to bind a 4Fe-4S-S-AdoMet cluster, as occurs with other proteins of this family. This protein may be an inactive homolog.</text>
</comment>
<protein>
    <recommendedName>
        <fullName>Putative heme chaperone HemW-like protein</fullName>
    </recommendedName>
</protein>
<proteinExistence type="inferred from homology"/>
<gene>
    <name evidence="1" type="primary">hemW</name>
    <name type="ordered locus">bbp_498</name>
</gene>
<accession>Q89A47</accession>
<sequence length="374" mass="44752">MKLLGLYINIPWPTKRYKYHDFKFPEYKKKINEKKYIHHLLQDLKKDSLLVPNRTINTIFIGGIAPNFFKLTSIKYLLKKIKNIIPISKNAENTIEFHISKLSEKKIFYYKKFGINRFSIRIQTFDQKKFNSLSKVHISKNILHKIKKINIEKFKNINLDLIYGLPKQSLQEALLDLKTAISLKPNHISWCEFYIEKNNNNYKNLSKSCNLNIIWKIFLQGEKLLKKSGYKKYEISSYSKTNYQCLHNLNYWKFGDYLGIGCNAHGKITQKNGKIIKTIKNKNLKKFMNGKYTYKNHIISKKNLSLEFFMNRLRLNTPIYRKDFKKYTYISEFYIKNEIKQAIEQNYLIETKKYWKMTSKGIQFLDSLLEIFIT</sequence>